<sequence length="452" mass="50054">MTNIALLQSLGLFDARVPRYTSYPAAPVFSGAVGADFQAQAIEALDPAVPISVYVHVPFCERLCWFCACRTQGTQTLAPVEAYVGTLLQELELVKQHLPAGVKAGRLHWGGGTPTILSPELIHKLAQAIKAVIPFAEDYEFSVEIDPMMVDEPKIRALSEEGMNRASIGIQDFTDIVQNAIGREQPFENTKACVETLRRYGVHSLNTDLVYGLPHQNRESLAATIDKVLSLRPDRVAIFGYAHVPWMAKRQKLIDETVLPPDIERHELANLAARLFTEGGFERIGIDHFALPDDSMAVAARSRKLRRNFQGYTDDTCPTLLGIGASSISKFEQGYLQNTAATAAYIKSIEEGRLPGYRGHRMTEEDYLHGRAIEMIMCDFFLDLPALRARFGEPAETMVPRIAEAAEKFTPFVTVDADGSMSIAKEGRALARMIARLFDAYETPEARYSQAS</sequence>
<organism>
    <name type="scientific">Cereibacter sphaeroides (strain ATCC 17023 / DSM 158 / JCM 6121 / CCUG 31486 / LMG 2827 / NBRC 12203 / NCIMB 8253 / ATH 2.4.1.)</name>
    <name type="common">Rhodobacter sphaeroides</name>
    <dbReference type="NCBI Taxonomy" id="272943"/>
    <lineage>
        <taxon>Bacteria</taxon>
        <taxon>Pseudomonadati</taxon>
        <taxon>Pseudomonadota</taxon>
        <taxon>Alphaproteobacteria</taxon>
        <taxon>Rhodobacterales</taxon>
        <taxon>Paracoccaceae</taxon>
        <taxon>Cereibacter</taxon>
    </lineage>
</organism>
<name>HEMF_CERS4</name>
<keyword id="KW-0004">4Fe-4S</keyword>
<keyword id="KW-0077">Bacteriochlorophyll biosynthesis</keyword>
<keyword id="KW-0149">Chlorophyll biosynthesis</keyword>
<keyword id="KW-0963">Cytoplasm</keyword>
<keyword id="KW-0408">Iron</keyword>
<keyword id="KW-0411">Iron-sulfur</keyword>
<keyword id="KW-0479">Metal-binding</keyword>
<keyword id="KW-0560">Oxidoreductase</keyword>
<keyword id="KW-0627">Porphyrin biosynthesis</keyword>
<keyword id="KW-1185">Reference proteome</keyword>
<keyword id="KW-0949">S-adenosyl-L-methionine</keyword>
<evidence type="ECO:0000250" key="1"/>
<evidence type="ECO:0000250" key="2">
    <source>
        <dbReference type="UniProtKB" id="P32131"/>
    </source>
</evidence>
<evidence type="ECO:0000255" key="3">
    <source>
        <dbReference type="PROSITE-ProRule" id="PRU01266"/>
    </source>
</evidence>
<evidence type="ECO:0000305" key="4"/>
<proteinExistence type="inferred from homology"/>
<feature type="chain" id="PRO_0000109948" description="Coproporphyrinogen III oxidase, anaerobic 1">
    <location>
        <begin position="1"/>
        <end position="452"/>
    </location>
</feature>
<feature type="domain" description="Radical SAM core" evidence="3">
    <location>
        <begin position="45"/>
        <end position="278"/>
    </location>
</feature>
<feature type="binding site" evidence="1">
    <location>
        <position position="54"/>
    </location>
    <ligand>
        <name>S-adenosyl-L-methionine</name>
        <dbReference type="ChEBI" id="CHEBI:59789"/>
        <label>1</label>
    </ligand>
</feature>
<feature type="binding site" evidence="1">
    <location>
        <position position="60"/>
    </location>
    <ligand>
        <name>[4Fe-4S] cluster</name>
        <dbReference type="ChEBI" id="CHEBI:49883"/>
        <note>4Fe-4S-S-AdoMet</note>
    </ligand>
</feature>
<feature type="binding site" evidence="1">
    <location>
        <position position="64"/>
    </location>
    <ligand>
        <name>[4Fe-4S] cluster</name>
        <dbReference type="ChEBI" id="CHEBI:49883"/>
        <note>4Fe-4S-S-AdoMet</note>
    </ligand>
</feature>
<feature type="binding site" evidence="1">
    <location>
        <position position="66"/>
    </location>
    <ligand>
        <name>S-adenosyl-L-methionine</name>
        <dbReference type="ChEBI" id="CHEBI:59789"/>
        <label>2</label>
    </ligand>
</feature>
<feature type="binding site" evidence="1">
    <location>
        <position position="67"/>
    </location>
    <ligand>
        <name>[4Fe-4S] cluster</name>
        <dbReference type="ChEBI" id="CHEBI:49883"/>
        <note>4Fe-4S-S-AdoMet</note>
    </ligand>
</feature>
<feature type="binding site" evidence="1">
    <location>
        <position position="111"/>
    </location>
    <ligand>
        <name>S-adenosyl-L-methionine</name>
        <dbReference type="ChEBI" id="CHEBI:59789"/>
        <label>1</label>
    </ligand>
</feature>
<feature type="binding site" evidence="1">
    <location>
        <begin position="112"/>
        <end position="113"/>
    </location>
    <ligand>
        <name>S-adenosyl-L-methionine</name>
        <dbReference type="ChEBI" id="CHEBI:59789"/>
        <label>2</label>
    </ligand>
</feature>
<feature type="binding site" evidence="1">
    <location>
        <position position="144"/>
    </location>
    <ligand>
        <name>S-adenosyl-L-methionine</name>
        <dbReference type="ChEBI" id="CHEBI:59789"/>
        <label>1</label>
    </ligand>
</feature>
<feature type="binding site" evidence="1">
    <location>
        <position position="171"/>
    </location>
    <ligand>
        <name>S-adenosyl-L-methionine</name>
        <dbReference type="ChEBI" id="CHEBI:59789"/>
        <label>2</label>
    </ligand>
</feature>
<feature type="binding site" evidence="1">
    <location>
        <position position="183"/>
    </location>
    <ligand>
        <name>S-adenosyl-L-methionine</name>
        <dbReference type="ChEBI" id="CHEBI:59789"/>
        <label>2</label>
    </ligand>
</feature>
<feature type="binding site" evidence="1">
    <location>
        <position position="208"/>
    </location>
    <ligand>
        <name>S-adenosyl-L-methionine</name>
        <dbReference type="ChEBI" id="CHEBI:59789"/>
        <label>2</label>
    </ligand>
</feature>
<feature type="sequence conflict" description="In Ref. 1; AAB24393." evidence="4" ref="1">
    <original>ETL</original>
    <variation>QSV</variation>
    <location>
        <begin position="195"/>
        <end position="197"/>
    </location>
</feature>
<feature type="sequence conflict" description="In Ref. 1; AAB24393." evidence="4" ref="1">
    <original>D</original>
    <variation>E</variation>
    <location>
        <position position="383"/>
    </location>
</feature>
<feature type="sequence conflict" description="In Ref. 1; AAB24393." evidence="4" ref="1">
    <original>PRIAEAAEKF</original>
    <variation>LAHRRSGREV</variation>
    <location>
        <begin position="400"/>
        <end position="409"/>
    </location>
</feature>
<comment type="function">
    <text evidence="2">Anaerobic transformation of coproporphyrinogen III into protoporphyrinogen IX. Dedicated to bacteriochlorophyll biosynthesis.</text>
</comment>
<comment type="catalytic activity">
    <reaction evidence="2">
        <text>coproporphyrinogen III + 2 S-adenosyl-L-methionine = protoporphyrinogen IX + 2 5'-deoxyadenosine + 2 L-methionine + 2 CO2</text>
        <dbReference type="Rhea" id="RHEA:15425"/>
        <dbReference type="ChEBI" id="CHEBI:16526"/>
        <dbReference type="ChEBI" id="CHEBI:17319"/>
        <dbReference type="ChEBI" id="CHEBI:57307"/>
        <dbReference type="ChEBI" id="CHEBI:57309"/>
        <dbReference type="ChEBI" id="CHEBI:57844"/>
        <dbReference type="ChEBI" id="CHEBI:59789"/>
        <dbReference type="EC" id="1.3.98.3"/>
    </reaction>
</comment>
<comment type="cofactor">
    <cofactor evidence="2">
        <name>[4Fe-4S] cluster</name>
        <dbReference type="ChEBI" id="CHEBI:49883"/>
    </cofactor>
    <text evidence="2">Binds 1 [4Fe-4S] cluster. The cluster is coordinated with 3 cysteines and an exchangeable S-adenosyl-L-methionine.</text>
</comment>
<comment type="pathway">
    <text>Porphyrin-containing compound metabolism; protoporphyrin-IX biosynthesis; protoporphyrinogen-IX from coproporphyrinogen-III (AdoMet route): step 1/1.</text>
</comment>
<comment type="subunit">
    <text evidence="2">Monomer.</text>
</comment>
<comment type="subcellular location">
    <subcellularLocation>
        <location>Cytoplasm</location>
    </subcellularLocation>
</comment>
<comment type="similarity">
    <text evidence="4">Belongs to the anaerobic coproporphyrinogen-III oxidase family.</text>
</comment>
<comment type="sequence caution" evidence="4">
    <conflict type="erroneous initiation">
        <sequence resource="EMBL-CDS" id="AAB24393"/>
    </conflict>
</comment>
<reference key="1">
    <citation type="journal article" date="1992" name="Mol. Microbiol.">
        <title>A putative anaerobic coproporphyrinogen III oxidase in Rhodobacter sphaeroides. I. Molecular cloning, transposon mutagenesis and sequence analysis of the gene.</title>
        <authorList>
            <person name="Coomber S.A."/>
            <person name="Jones R.M."/>
            <person name="Jordan P.M."/>
            <person name="Hunter C.N."/>
        </authorList>
    </citation>
    <scope>NUCLEOTIDE SEQUENCE [GENOMIC DNA]</scope>
</reference>
<reference key="2">
    <citation type="submission" date="2005-09" db="EMBL/GenBank/DDBJ databases">
        <title>Complete sequence of chromosome 1 of Rhodobacter sphaeroides 2.4.1.</title>
        <authorList>
            <person name="Copeland A."/>
            <person name="Lucas S."/>
            <person name="Lapidus A."/>
            <person name="Barry K."/>
            <person name="Detter J.C."/>
            <person name="Glavina T."/>
            <person name="Hammon N."/>
            <person name="Israni S."/>
            <person name="Pitluck S."/>
            <person name="Richardson P."/>
            <person name="Mackenzie C."/>
            <person name="Choudhary M."/>
            <person name="Larimer F."/>
            <person name="Hauser L.J."/>
            <person name="Land M."/>
            <person name="Donohue T.J."/>
            <person name="Kaplan S."/>
        </authorList>
    </citation>
    <scope>NUCLEOTIDE SEQUENCE [LARGE SCALE GENOMIC DNA]</scope>
    <source>
        <strain>ATCC 17023 / DSM 158 / JCM 6121 / CCUG 31486 / LMG 2827 / NBRC 12203 / NCIMB 8253 / ATH 2.4.1.</strain>
    </source>
</reference>
<accession>P33770</accession>
<accession>Q3J141</accession>
<gene>
    <name type="primary">hemN</name>
    <name type="ordered locus">RHOS4_19250</name>
    <name type="ORF">RSP_0317</name>
</gene>
<protein>
    <recommendedName>
        <fullName>Coproporphyrinogen III oxidase, anaerobic 1</fullName>
        <shortName>Coprogen oxidase</shortName>
        <shortName>Coproporphyrinogenase</shortName>
        <ecNumber evidence="2">1.3.98.3</ecNumber>
    </recommendedName>
</protein>
<dbReference type="EC" id="1.3.98.3" evidence="2"/>
<dbReference type="EMBL" id="S50573">
    <property type="protein sequence ID" value="AAB24393.1"/>
    <property type="status" value="ALT_INIT"/>
    <property type="molecule type" value="Genomic_DNA"/>
</dbReference>
<dbReference type="EMBL" id="CP000143">
    <property type="protein sequence ID" value="ABA79493.1"/>
    <property type="molecule type" value="Genomic_DNA"/>
</dbReference>
<dbReference type="PIR" id="S28440">
    <property type="entry name" value="S28440"/>
</dbReference>
<dbReference type="RefSeq" id="WP_011338144.1">
    <property type="nucleotide sequence ID" value="NC_007493.2"/>
</dbReference>
<dbReference type="RefSeq" id="YP_353394.1">
    <property type="nucleotide sequence ID" value="NC_007493.2"/>
</dbReference>
<dbReference type="SMR" id="P33770"/>
<dbReference type="STRING" id="272943.RSP_0317"/>
<dbReference type="EnsemblBacteria" id="ABA79493">
    <property type="protein sequence ID" value="ABA79493"/>
    <property type="gene ID" value="RSP_0317"/>
</dbReference>
<dbReference type="GeneID" id="3719077"/>
<dbReference type="KEGG" id="rsp:RSP_0317"/>
<dbReference type="PATRIC" id="fig|272943.9.peg.2264"/>
<dbReference type="eggNOG" id="COG0635">
    <property type="taxonomic scope" value="Bacteria"/>
</dbReference>
<dbReference type="OrthoDB" id="9808022at2"/>
<dbReference type="PhylomeDB" id="P33770"/>
<dbReference type="BioCyc" id="MetaCyc:MONOMER-19721"/>
<dbReference type="UniPathway" id="UPA00251">
    <property type="reaction ID" value="UER00323"/>
</dbReference>
<dbReference type="Proteomes" id="UP000002703">
    <property type="component" value="Chromosome 1"/>
</dbReference>
<dbReference type="GO" id="GO:0005737">
    <property type="term" value="C:cytoplasm"/>
    <property type="evidence" value="ECO:0007669"/>
    <property type="project" value="UniProtKB-SubCell"/>
</dbReference>
<dbReference type="GO" id="GO:0051539">
    <property type="term" value="F:4 iron, 4 sulfur cluster binding"/>
    <property type="evidence" value="ECO:0007669"/>
    <property type="project" value="UniProtKB-KW"/>
</dbReference>
<dbReference type="GO" id="GO:0051989">
    <property type="term" value="F:coproporphyrinogen dehydrogenase activity"/>
    <property type="evidence" value="ECO:0007669"/>
    <property type="project" value="UniProtKB-EC"/>
</dbReference>
<dbReference type="GO" id="GO:0004109">
    <property type="term" value="F:coproporphyrinogen oxidase activity"/>
    <property type="evidence" value="ECO:0007669"/>
    <property type="project" value="InterPro"/>
</dbReference>
<dbReference type="GO" id="GO:0046872">
    <property type="term" value="F:metal ion binding"/>
    <property type="evidence" value="ECO:0007669"/>
    <property type="project" value="UniProtKB-KW"/>
</dbReference>
<dbReference type="GO" id="GO:0030494">
    <property type="term" value="P:bacteriochlorophyll biosynthetic process"/>
    <property type="evidence" value="ECO:0007669"/>
    <property type="project" value="UniProtKB-KW"/>
</dbReference>
<dbReference type="GO" id="GO:0006782">
    <property type="term" value="P:protoporphyrinogen IX biosynthetic process"/>
    <property type="evidence" value="ECO:0007669"/>
    <property type="project" value="UniProtKB-UniPathway"/>
</dbReference>
<dbReference type="FunFam" id="3.20.20.70:FF:000363">
    <property type="entry name" value="Oxygen-independent coproporphyrinogen III oxidase"/>
    <property type="match status" value="1"/>
</dbReference>
<dbReference type="Gene3D" id="1.10.10.920">
    <property type="match status" value="1"/>
</dbReference>
<dbReference type="Gene3D" id="3.20.20.70">
    <property type="entry name" value="Aldolase class I"/>
    <property type="match status" value="1"/>
</dbReference>
<dbReference type="InterPro" id="IPR013785">
    <property type="entry name" value="Aldolase_TIM"/>
</dbReference>
<dbReference type="InterPro" id="IPR004558">
    <property type="entry name" value="Coprogen_oxidase_HemN"/>
</dbReference>
<dbReference type="InterPro" id="IPR034505">
    <property type="entry name" value="Coproporphyrinogen-III_oxidase"/>
</dbReference>
<dbReference type="InterPro" id="IPR006638">
    <property type="entry name" value="Elp3/MiaA/NifB-like_rSAM"/>
</dbReference>
<dbReference type="InterPro" id="IPR007197">
    <property type="entry name" value="rSAM"/>
</dbReference>
<dbReference type="NCBIfam" id="TIGR00538">
    <property type="entry name" value="hemN"/>
    <property type="match status" value="1"/>
</dbReference>
<dbReference type="PANTHER" id="PTHR13932">
    <property type="entry name" value="COPROPORPHYRINIGEN III OXIDASE"/>
    <property type="match status" value="1"/>
</dbReference>
<dbReference type="PANTHER" id="PTHR13932:SF6">
    <property type="entry name" value="OXYGEN-INDEPENDENT COPROPORPHYRINOGEN III OXIDASE"/>
    <property type="match status" value="1"/>
</dbReference>
<dbReference type="Pfam" id="PF04055">
    <property type="entry name" value="Radical_SAM"/>
    <property type="match status" value="1"/>
</dbReference>
<dbReference type="PIRSF" id="PIRSF000167">
    <property type="entry name" value="HemN"/>
    <property type="match status" value="1"/>
</dbReference>
<dbReference type="SFLD" id="SFLDG01065">
    <property type="entry name" value="anaerobic_coproporphyrinogen-I"/>
    <property type="match status" value="1"/>
</dbReference>
<dbReference type="SFLD" id="SFLDS00029">
    <property type="entry name" value="Radical_SAM"/>
    <property type="match status" value="1"/>
</dbReference>
<dbReference type="SMART" id="SM00729">
    <property type="entry name" value="Elp3"/>
    <property type="match status" value="1"/>
</dbReference>
<dbReference type="SUPFAM" id="SSF102114">
    <property type="entry name" value="Radical SAM enzymes"/>
    <property type="match status" value="1"/>
</dbReference>
<dbReference type="PROSITE" id="PS51918">
    <property type="entry name" value="RADICAL_SAM"/>
    <property type="match status" value="1"/>
</dbReference>